<accession>Q91VN2</accession>
<accession>E9QNP8</accession>
<protein>
    <recommendedName>
        <fullName>Uncharacterized protein C11orf71 homolog</fullName>
    </recommendedName>
</protein>
<dbReference type="EMBL" id="AC160992">
    <property type="status" value="NOT_ANNOTATED_CDS"/>
    <property type="molecule type" value="Genomic_DNA"/>
</dbReference>
<dbReference type="EMBL" id="BC011344">
    <property type="protein sequence ID" value="AAH11344.1"/>
    <property type="molecule type" value="mRNA"/>
</dbReference>
<dbReference type="CCDS" id="CCDS52787.1"/>
<dbReference type="RefSeq" id="NP_001004191.2">
    <property type="nucleotide sequence ID" value="NM_001004191.3"/>
</dbReference>
<dbReference type="SMR" id="Q91VN2"/>
<dbReference type="FunCoup" id="Q91VN2">
    <property type="interactions" value="531"/>
</dbReference>
<dbReference type="PhosphoSitePlus" id="Q91VN2"/>
<dbReference type="jPOST" id="Q91VN2"/>
<dbReference type="PaxDb" id="10090-ENSMUSP00000040380"/>
<dbReference type="ProteomicsDB" id="283505"/>
<dbReference type="Antibodypedia" id="54330">
    <property type="antibodies" value="39 antibodies from 5 providers"/>
</dbReference>
<dbReference type="Ensembl" id="ENSMUST00000048824.9">
    <property type="protein sequence ID" value="ENSMUSP00000040380.8"/>
    <property type="gene ID" value="ENSMUSG00000042293.9"/>
</dbReference>
<dbReference type="GeneID" id="434402"/>
<dbReference type="KEGG" id="mmu:434402"/>
<dbReference type="UCSC" id="uc009pii.3">
    <property type="organism name" value="mouse"/>
</dbReference>
<dbReference type="AGR" id="MGI:3643566"/>
<dbReference type="MGI" id="MGI:3643566">
    <property type="gene designation" value="Gm5617"/>
</dbReference>
<dbReference type="VEuPathDB" id="HostDB:ENSMUSG00000042293"/>
<dbReference type="eggNOG" id="ENOG502TDVE">
    <property type="taxonomic scope" value="Eukaryota"/>
</dbReference>
<dbReference type="GeneTree" id="ENSGT00390000007962"/>
<dbReference type="HOGENOM" id="CLU_149706_0_0_1"/>
<dbReference type="InParanoid" id="Q91VN2"/>
<dbReference type="OMA" id="LRWCSTC"/>
<dbReference type="OrthoDB" id="9681738at2759"/>
<dbReference type="TreeFam" id="TF337033"/>
<dbReference type="BioGRID-ORCS" id="434402">
    <property type="hits" value="0 hits in 72 CRISPR screens"/>
</dbReference>
<dbReference type="ChiTaRS" id="Gm5617">
    <property type="organism name" value="mouse"/>
</dbReference>
<dbReference type="PRO" id="PR:Q91VN2"/>
<dbReference type="Proteomes" id="UP000000589">
    <property type="component" value="Chromosome 9"/>
</dbReference>
<dbReference type="RNAct" id="Q91VN2">
    <property type="molecule type" value="protein"/>
</dbReference>
<dbReference type="Bgee" id="ENSMUSG00000042293">
    <property type="expression patterns" value="Expressed in seminiferous tubule of testis and 182 other cell types or tissues"/>
</dbReference>
<dbReference type="InterPro" id="IPR031487">
    <property type="entry name" value="DUF4687"/>
</dbReference>
<dbReference type="PANTHER" id="PTHR16445:SF0">
    <property type="entry name" value="GENE 5617-RELATED"/>
    <property type="match status" value="1"/>
</dbReference>
<dbReference type="PANTHER" id="PTHR16445">
    <property type="entry name" value="SIMILAR TO HYPOTHETICAL PROTEIN FLJ20010"/>
    <property type="match status" value="1"/>
</dbReference>
<dbReference type="Pfam" id="PF15747">
    <property type="entry name" value="DUF4687"/>
    <property type="match status" value="1"/>
</dbReference>
<sequence>MAQNSVSLSAGDQANRMAHRSSQGDLNPSAMAWAMVSGDSFLVTRLDPNQPGPRPPARPSVRADRRRVPVGGRSRSRSRQGRFSPYPIPGVKLDLLRSVLQQRLVALGTALATRISA</sequence>
<reference key="1">
    <citation type="journal article" date="2009" name="PLoS Biol.">
        <title>Lineage-specific biology revealed by a finished genome assembly of the mouse.</title>
        <authorList>
            <person name="Church D.M."/>
            <person name="Goodstadt L."/>
            <person name="Hillier L.W."/>
            <person name="Zody M.C."/>
            <person name="Goldstein S."/>
            <person name="She X."/>
            <person name="Bult C.J."/>
            <person name="Agarwala R."/>
            <person name="Cherry J.L."/>
            <person name="DiCuccio M."/>
            <person name="Hlavina W."/>
            <person name="Kapustin Y."/>
            <person name="Meric P."/>
            <person name="Maglott D."/>
            <person name="Birtle Z."/>
            <person name="Marques A.C."/>
            <person name="Graves T."/>
            <person name="Zhou S."/>
            <person name="Teague B."/>
            <person name="Potamousis K."/>
            <person name="Churas C."/>
            <person name="Place M."/>
            <person name="Herschleb J."/>
            <person name="Runnheim R."/>
            <person name="Forrest D."/>
            <person name="Amos-Landgraf J."/>
            <person name="Schwartz D.C."/>
            <person name="Cheng Z."/>
            <person name="Lindblad-Toh K."/>
            <person name="Eichler E.E."/>
            <person name="Ponting C.P."/>
        </authorList>
    </citation>
    <scope>NUCLEOTIDE SEQUENCE [LARGE SCALE GENOMIC DNA]</scope>
    <source>
        <strain>C57BL/6J</strain>
    </source>
</reference>
<reference key="2">
    <citation type="journal article" date="2004" name="Genome Res.">
        <title>The status, quality, and expansion of the NIH full-length cDNA project: the Mammalian Gene Collection (MGC).</title>
        <authorList>
            <consortium name="The MGC Project Team"/>
        </authorList>
    </citation>
    <scope>NUCLEOTIDE SEQUENCE [LARGE SCALE MRNA]</scope>
    <source>
        <tissue>Mammary tumor</tissue>
    </source>
</reference>
<feature type="chain" id="PRO_0000274326" description="Uncharacterized protein C11orf71 homolog">
    <location>
        <begin position="1"/>
        <end position="117"/>
    </location>
</feature>
<feature type="region of interest" description="Disordered" evidence="1">
    <location>
        <begin position="1"/>
        <end position="30"/>
    </location>
</feature>
<feature type="region of interest" description="Disordered" evidence="1">
    <location>
        <begin position="43"/>
        <end position="87"/>
    </location>
</feature>
<feature type="compositionally biased region" description="Polar residues" evidence="1">
    <location>
        <begin position="1"/>
        <end position="12"/>
    </location>
</feature>
<feature type="sequence conflict" description="In Ref. 2; AAH11344." evidence="2" ref="2">
    <original>G</original>
    <variation>E</variation>
    <location>
        <position position="52"/>
    </location>
</feature>
<organism>
    <name type="scientific">Mus musculus</name>
    <name type="common">Mouse</name>
    <dbReference type="NCBI Taxonomy" id="10090"/>
    <lineage>
        <taxon>Eukaryota</taxon>
        <taxon>Metazoa</taxon>
        <taxon>Chordata</taxon>
        <taxon>Craniata</taxon>
        <taxon>Vertebrata</taxon>
        <taxon>Euteleostomi</taxon>
        <taxon>Mammalia</taxon>
        <taxon>Eutheria</taxon>
        <taxon>Euarchontoglires</taxon>
        <taxon>Glires</taxon>
        <taxon>Rodentia</taxon>
        <taxon>Myomorpha</taxon>
        <taxon>Muroidea</taxon>
        <taxon>Muridae</taxon>
        <taxon>Murinae</taxon>
        <taxon>Mus</taxon>
        <taxon>Mus</taxon>
    </lineage>
</organism>
<gene>
    <name type="primary">Gm5617</name>
</gene>
<name>CK071_MOUSE</name>
<evidence type="ECO:0000256" key="1">
    <source>
        <dbReference type="SAM" id="MobiDB-lite"/>
    </source>
</evidence>
<evidence type="ECO:0000305" key="2"/>
<keyword id="KW-1185">Reference proteome</keyword>
<proteinExistence type="predicted"/>